<reference key="1">
    <citation type="journal article" date="2001" name="Science">
        <title>The genome of the natural genetic engineer Agrobacterium tumefaciens C58.</title>
        <authorList>
            <person name="Wood D.W."/>
            <person name="Setubal J.C."/>
            <person name="Kaul R."/>
            <person name="Monks D.E."/>
            <person name="Kitajima J.P."/>
            <person name="Okura V.K."/>
            <person name="Zhou Y."/>
            <person name="Chen L."/>
            <person name="Wood G.E."/>
            <person name="Almeida N.F. Jr."/>
            <person name="Woo L."/>
            <person name="Chen Y."/>
            <person name="Paulsen I.T."/>
            <person name="Eisen J.A."/>
            <person name="Karp P.D."/>
            <person name="Bovee D. Sr."/>
            <person name="Chapman P."/>
            <person name="Clendenning J."/>
            <person name="Deatherage G."/>
            <person name="Gillet W."/>
            <person name="Grant C."/>
            <person name="Kutyavin T."/>
            <person name="Levy R."/>
            <person name="Li M.-J."/>
            <person name="McClelland E."/>
            <person name="Palmieri A."/>
            <person name="Raymond C."/>
            <person name="Rouse G."/>
            <person name="Saenphimmachak C."/>
            <person name="Wu Z."/>
            <person name="Romero P."/>
            <person name="Gordon D."/>
            <person name="Zhang S."/>
            <person name="Yoo H."/>
            <person name="Tao Y."/>
            <person name="Biddle P."/>
            <person name="Jung M."/>
            <person name="Krespan W."/>
            <person name="Perry M."/>
            <person name="Gordon-Kamm B."/>
            <person name="Liao L."/>
            <person name="Kim S."/>
            <person name="Hendrick C."/>
            <person name="Zhao Z.-Y."/>
            <person name="Dolan M."/>
            <person name="Chumley F."/>
            <person name="Tingey S.V."/>
            <person name="Tomb J.-F."/>
            <person name="Gordon M.P."/>
            <person name="Olson M.V."/>
            <person name="Nester E.W."/>
        </authorList>
    </citation>
    <scope>NUCLEOTIDE SEQUENCE [LARGE SCALE GENOMIC DNA]</scope>
    <source>
        <strain>C58 / ATCC 33970</strain>
    </source>
</reference>
<reference key="2">
    <citation type="journal article" date="2001" name="Science">
        <title>Genome sequence of the plant pathogen and biotechnology agent Agrobacterium tumefaciens C58.</title>
        <authorList>
            <person name="Goodner B."/>
            <person name="Hinkle G."/>
            <person name="Gattung S."/>
            <person name="Miller N."/>
            <person name="Blanchard M."/>
            <person name="Qurollo B."/>
            <person name="Goldman B.S."/>
            <person name="Cao Y."/>
            <person name="Askenazi M."/>
            <person name="Halling C."/>
            <person name="Mullin L."/>
            <person name="Houmiel K."/>
            <person name="Gordon J."/>
            <person name="Vaudin M."/>
            <person name="Iartchouk O."/>
            <person name="Epp A."/>
            <person name="Liu F."/>
            <person name="Wollam C."/>
            <person name="Allinger M."/>
            <person name="Doughty D."/>
            <person name="Scott C."/>
            <person name="Lappas C."/>
            <person name="Markelz B."/>
            <person name="Flanagan C."/>
            <person name="Crowell C."/>
            <person name="Gurson J."/>
            <person name="Lomo C."/>
            <person name="Sear C."/>
            <person name="Strub G."/>
            <person name="Cielo C."/>
            <person name="Slater S."/>
        </authorList>
    </citation>
    <scope>NUCLEOTIDE SEQUENCE [LARGE SCALE GENOMIC DNA]</scope>
    <source>
        <strain>C58 / ATCC 33970</strain>
    </source>
</reference>
<reference key="3">
    <citation type="journal article" date="2017" name="Green Chem.">
        <title>Expanding the reaction space of aldolases using hydroxypyruvate as a nucleophilic substrate.</title>
        <authorList>
            <person name="de Berardinis V."/>
            <person name="Guerard-Helaine C."/>
            <person name="Darii E."/>
            <person name="Bastard K."/>
            <person name="Helaine V."/>
            <person name="Mariage A."/>
            <person name="Petit J.-L."/>
            <person name="Poupard N."/>
            <person name="Sanchez-Moreno I."/>
            <person name="Stam M."/>
            <person name="Gefflaut T."/>
            <person name="Salanoubat M."/>
            <person name="Lemaire M."/>
        </authorList>
    </citation>
    <scope>FUNCTION</scope>
    <scope>CATALYTIC ACTIVITY</scope>
</reference>
<protein>
    <recommendedName>
        <fullName evidence="3">Hydroxypyruvate/pyruvate aldolase</fullName>
        <shortName evidence="3">HPA/PA aldolase</shortName>
        <ecNumber evidence="2">4.1.2.-</ecNumber>
    </recommendedName>
</protein>
<gene>
    <name evidence="5" type="ordered locus">Atu1014</name>
</gene>
<organism>
    <name type="scientific">Agrobacterium fabrum (strain C58 / ATCC 33970)</name>
    <name type="common">Agrobacterium tumefaciens (strain C58)</name>
    <dbReference type="NCBI Taxonomy" id="176299"/>
    <lineage>
        <taxon>Bacteria</taxon>
        <taxon>Pseudomonadati</taxon>
        <taxon>Pseudomonadota</taxon>
        <taxon>Alphaproteobacteria</taxon>
        <taxon>Hyphomicrobiales</taxon>
        <taxon>Rhizobiaceae</taxon>
        <taxon>Rhizobium/Agrobacterium group</taxon>
        <taxon>Agrobacterium</taxon>
        <taxon>Agrobacterium tumefaciens complex</taxon>
    </lineage>
</organism>
<name>HPAAL_AGRFC</name>
<sequence>MPAPENRFKTAIHAGKPQIGLWLDMGEAITAEIAGTAGFDWLVIDGEHGPNDLRSIIDQLRALATSPAEPVVRVPVGESWMIKQLLDAGARTLLVPMVDSAEQASDLVSAMHYPPRGIRGMGAAVARASAFNTIADYADSASDGVCLLVQAETRAAINDLDNILAVEGVDGVFIGPADLAADMGYLGRIDEPEVQAVIEAAIVKIVAAGKAAGILTFNEAYNRRYLELGASFVAVGADVTEFANTLRALSARYKGGSAPQPSRSGY</sequence>
<evidence type="ECO:0000250" key="1">
    <source>
        <dbReference type="UniProtKB" id="Q47098"/>
    </source>
</evidence>
<evidence type="ECO:0000269" key="2">
    <source ref="3"/>
</evidence>
<evidence type="ECO:0000303" key="3">
    <source ref="3"/>
</evidence>
<evidence type="ECO:0000305" key="4"/>
<evidence type="ECO:0000312" key="5">
    <source>
        <dbReference type="EMBL" id="AAK86824.1"/>
    </source>
</evidence>
<proteinExistence type="evidence at protein level"/>
<feature type="chain" id="PRO_0000460947" description="Hydroxypyruvate/pyruvate aldolase">
    <location>
        <begin position="1"/>
        <end position="266"/>
    </location>
</feature>
<feature type="active site" description="Proton acceptor" evidence="1">
    <location>
        <position position="48"/>
    </location>
</feature>
<feature type="binding site" evidence="1">
    <location>
        <position position="152"/>
    </location>
    <ligand>
        <name>a divalent metal cation</name>
        <dbReference type="ChEBI" id="CHEBI:60240"/>
    </ligand>
</feature>
<feature type="binding site" evidence="1">
    <location>
        <position position="178"/>
    </location>
    <ligand>
        <name>a divalent metal cation</name>
        <dbReference type="ChEBI" id="CHEBI:60240"/>
    </ligand>
</feature>
<feature type="site" description="Transition state stabilizer" evidence="1">
    <location>
        <position position="73"/>
    </location>
</feature>
<feature type="site" description="Increases basicity of active site His" evidence="1">
    <location>
        <position position="87"/>
    </location>
</feature>
<comment type="function">
    <text evidence="2">Aldolase which can catalyze in vitro the aldolisation reaction between hydroxypyruvate (HPA) or pyruvate (PA) and D-glyceraldehyde (D-GA) (Ref.3). The condensation of pyruvate and D-glyceraldehyde produces 2-dehydro-3-deoxy-L-galactonate as the major product and 2-dehydro-3-deoxy-D-gluconate (Ref.3). Has weak activity with hydroxypyruvate and D-glyceraldehyde (Ref.3).</text>
</comment>
<comment type="catalytic activity">
    <reaction evidence="2">
        <text>D-glyceraldehyde + pyruvate = 2-dehydro-3-deoxy-L-galactonate</text>
        <dbReference type="Rhea" id="RHEA:80055"/>
        <dbReference type="ChEBI" id="CHEBI:15361"/>
        <dbReference type="ChEBI" id="CHEBI:17378"/>
        <dbReference type="ChEBI" id="CHEBI:75545"/>
    </reaction>
</comment>
<comment type="catalytic activity">
    <reaction evidence="2">
        <text>2-dehydro-3-deoxy-D-gluconate = D-glyceraldehyde + pyruvate</text>
        <dbReference type="Rhea" id="RHEA:35583"/>
        <dbReference type="ChEBI" id="CHEBI:15361"/>
        <dbReference type="ChEBI" id="CHEBI:17378"/>
        <dbReference type="ChEBI" id="CHEBI:57990"/>
    </reaction>
</comment>
<comment type="cofactor">
    <cofactor evidence="1">
        <name>a divalent metal cation</name>
        <dbReference type="ChEBI" id="CHEBI:60240"/>
    </cofactor>
</comment>
<comment type="similarity">
    <text evidence="4">Belongs to the HpcH/HpaI aldolase family.</text>
</comment>
<keyword id="KW-0456">Lyase</keyword>
<keyword id="KW-0479">Metal-binding</keyword>
<keyword id="KW-0670">Pyruvate</keyword>
<keyword id="KW-1185">Reference proteome</keyword>
<dbReference type="EC" id="4.1.2.-" evidence="2"/>
<dbReference type="EMBL" id="AE007869">
    <property type="protein sequence ID" value="AAK86824.1"/>
    <property type="molecule type" value="Genomic_DNA"/>
</dbReference>
<dbReference type="PIR" id="AF2701">
    <property type="entry name" value="AF2701"/>
</dbReference>
<dbReference type="PIR" id="G97483">
    <property type="entry name" value="G97483"/>
</dbReference>
<dbReference type="RefSeq" id="NP_354039.1">
    <property type="nucleotide sequence ID" value="NC_003062.2"/>
</dbReference>
<dbReference type="RefSeq" id="WP_010971334.1">
    <property type="nucleotide sequence ID" value="NC_003062.2"/>
</dbReference>
<dbReference type="SMR" id="A9CJL2"/>
<dbReference type="STRING" id="176299.Atu1014"/>
<dbReference type="EnsemblBacteria" id="AAK86824">
    <property type="protein sequence ID" value="AAK86824"/>
    <property type="gene ID" value="Atu1014"/>
</dbReference>
<dbReference type="GeneID" id="1133052"/>
<dbReference type="KEGG" id="atu:Atu1014"/>
<dbReference type="PATRIC" id="fig|176299.10.peg.1030"/>
<dbReference type="eggNOG" id="COG3836">
    <property type="taxonomic scope" value="Bacteria"/>
</dbReference>
<dbReference type="HOGENOM" id="CLU_059964_1_0_5"/>
<dbReference type="OrthoDB" id="9802624at2"/>
<dbReference type="PhylomeDB" id="A9CJL2"/>
<dbReference type="BioCyc" id="AGRO:ATU1014-MONOMER"/>
<dbReference type="Proteomes" id="UP000000813">
    <property type="component" value="Chromosome circular"/>
</dbReference>
<dbReference type="GO" id="GO:0005737">
    <property type="term" value="C:cytoplasm"/>
    <property type="evidence" value="ECO:0007669"/>
    <property type="project" value="TreeGrafter"/>
</dbReference>
<dbReference type="GO" id="GO:0016832">
    <property type="term" value="F:aldehyde-lyase activity"/>
    <property type="evidence" value="ECO:0007669"/>
    <property type="project" value="TreeGrafter"/>
</dbReference>
<dbReference type="GO" id="GO:0046872">
    <property type="term" value="F:metal ion binding"/>
    <property type="evidence" value="ECO:0007669"/>
    <property type="project" value="UniProtKB-KW"/>
</dbReference>
<dbReference type="FunFam" id="3.20.20.60:FF:000004">
    <property type="entry name" value="5-keto-4-deoxy-D-glucarate aldolase"/>
    <property type="match status" value="1"/>
</dbReference>
<dbReference type="Gene3D" id="3.20.20.60">
    <property type="entry name" value="Phosphoenolpyruvate-binding domains"/>
    <property type="match status" value="1"/>
</dbReference>
<dbReference type="InterPro" id="IPR005000">
    <property type="entry name" value="Aldolase/citrate-lyase_domain"/>
</dbReference>
<dbReference type="InterPro" id="IPR050251">
    <property type="entry name" value="HpcH-HpaI_aldolase"/>
</dbReference>
<dbReference type="InterPro" id="IPR015813">
    <property type="entry name" value="Pyrv/PenolPyrv_kinase-like_dom"/>
</dbReference>
<dbReference type="InterPro" id="IPR040442">
    <property type="entry name" value="Pyrv_kinase-like_dom_sf"/>
</dbReference>
<dbReference type="PANTHER" id="PTHR30502">
    <property type="entry name" value="2-KETO-3-DEOXY-L-RHAMNONATE ALDOLASE"/>
    <property type="match status" value="1"/>
</dbReference>
<dbReference type="PANTHER" id="PTHR30502:SF0">
    <property type="entry name" value="PHOSPHOENOLPYRUVATE CARBOXYLASE FAMILY PROTEIN"/>
    <property type="match status" value="1"/>
</dbReference>
<dbReference type="Pfam" id="PF03328">
    <property type="entry name" value="HpcH_HpaI"/>
    <property type="match status" value="1"/>
</dbReference>
<dbReference type="SUPFAM" id="SSF51621">
    <property type="entry name" value="Phosphoenolpyruvate/pyruvate domain"/>
    <property type="match status" value="1"/>
</dbReference>
<accession>A9CJL2</accession>